<gene>
    <name type="ordered locus">TPASS_0438</name>
</gene>
<proteinExistence type="inferred from homology"/>
<organism>
    <name type="scientific">Treponema pallidum subsp. pallidum (strain SS14)</name>
    <dbReference type="NCBI Taxonomy" id="455434"/>
    <lineage>
        <taxon>Bacteria</taxon>
        <taxon>Pseudomonadati</taxon>
        <taxon>Spirochaetota</taxon>
        <taxon>Spirochaetia</taxon>
        <taxon>Spirochaetales</taxon>
        <taxon>Treponemataceae</taxon>
        <taxon>Treponema</taxon>
    </lineage>
</organism>
<comment type="function">
    <text evidence="1">Pyrophosphatase that catalyzes the hydrolysis of nucleoside triphosphates to their monophosphate derivatives, with a high preference for the non-canonical purine nucleotides XTP (xanthosine triphosphate), dITP (deoxyinosine triphosphate) and ITP. Seems to function as a house-cleaning enzyme that removes non-canonical purine nucleotides from the nucleotide pool, thus preventing their incorporation into DNA/RNA and avoiding chromosomal lesions.</text>
</comment>
<comment type="catalytic activity">
    <reaction evidence="1">
        <text>XTP + H2O = XMP + diphosphate + H(+)</text>
        <dbReference type="Rhea" id="RHEA:28610"/>
        <dbReference type="ChEBI" id="CHEBI:15377"/>
        <dbReference type="ChEBI" id="CHEBI:15378"/>
        <dbReference type="ChEBI" id="CHEBI:33019"/>
        <dbReference type="ChEBI" id="CHEBI:57464"/>
        <dbReference type="ChEBI" id="CHEBI:61314"/>
        <dbReference type="EC" id="3.6.1.66"/>
    </reaction>
</comment>
<comment type="catalytic activity">
    <reaction evidence="1">
        <text>dITP + H2O = dIMP + diphosphate + H(+)</text>
        <dbReference type="Rhea" id="RHEA:28342"/>
        <dbReference type="ChEBI" id="CHEBI:15377"/>
        <dbReference type="ChEBI" id="CHEBI:15378"/>
        <dbReference type="ChEBI" id="CHEBI:33019"/>
        <dbReference type="ChEBI" id="CHEBI:61194"/>
        <dbReference type="ChEBI" id="CHEBI:61382"/>
        <dbReference type="EC" id="3.6.1.66"/>
    </reaction>
</comment>
<comment type="catalytic activity">
    <reaction evidence="1">
        <text>ITP + H2O = IMP + diphosphate + H(+)</text>
        <dbReference type="Rhea" id="RHEA:29399"/>
        <dbReference type="ChEBI" id="CHEBI:15377"/>
        <dbReference type="ChEBI" id="CHEBI:15378"/>
        <dbReference type="ChEBI" id="CHEBI:33019"/>
        <dbReference type="ChEBI" id="CHEBI:58053"/>
        <dbReference type="ChEBI" id="CHEBI:61402"/>
        <dbReference type="EC" id="3.6.1.66"/>
    </reaction>
</comment>
<comment type="cofactor">
    <cofactor evidence="1">
        <name>Mg(2+)</name>
        <dbReference type="ChEBI" id="CHEBI:18420"/>
    </cofactor>
    <text evidence="1">Binds 1 Mg(2+) ion per subunit.</text>
</comment>
<comment type="subunit">
    <text evidence="1">Homodimer.</text>
</comment>
<comment type="similarity">
    <text evidence="1">Belongs to the HAM1 NTPase family.</text>
</comment>
<feature type="chain" id="PRO_1000145503" description="dITP/XTP pyrophosphatase">
    <location>
        <begin position="1"/>
        <end position="269"/>
    </location>
</feature>
<feature type="active site" description="Proton acceptor" evidence="1">
    <location>
        <position position="82"/>
    </location>
</feature>
<feature type="binding site" evidence="1">
    <location>
        <begin position="22"/>
        <end position="27"/>
    </location>
    <ligand>
        <name>substrate</name>
    </ligand>
</feature>
<feature type="binding site" evidence="1">
    <location>
        <position position="82"/>
    </location>
    <ligand>
        <name>Mg(2+)</name>
        <dbReference type="ChEBI" id="CHEBI:18420"/>
    </ligand>
</feature>
<feature type="binding site" evidence="1">
    <location>
        <position position="83"/>
    </location>
    <ligand>
        <name>substrate</name>
    </ligand>
</feature>
<feature type="binding site" evidence="1">
    <location>
        <begin position="165"/>
        <end position="168"/>
    </location>
    <ligand>
        <name>substrate</name>
    </ligand>
</feature>
<feature type="binding site" evidence="1">
    <location>
        <position position="188"/>
    </location>
    <ligand>
        <name>substrate</name>
    </ligand>
</feature>
<feature type="binding site" evidence="1">
    <location>
        <begin position="193"/>
        <end position="194"/>
    </location>
    <ligand>
        <name>substrate</name>
    </ligand>
</feature>
<evidence type="ECO:0000255" key="1">
    <source>
        <dbReference type="HAMAP-Rule" id="MF_01405"/>
    </source>
</evidence>
<reference key="1">
    <citation type="journal article" date="2008" name="BMC Microbiol.">
        <title>Complete genome sequence of Treponema pallidum ssp. pallidum strain SS14 determined with oligonucleotide arrays.</title>
        <authorList>
            <person name="Matejkova P."/>
            <person name="Strouhal M."/>
            <person name="Smajs D."/>
            <person name="Norris S.J."/>
            <person name="Palzkill T."/>
            <person name="Petrosino J.F."/>
            <person name="Sodergren E."/>
            <person name="Norton J.E."/>
            <person name="Singh J."/>
            <person name="Richmond T.A."/>
            <person name="Molla M.N."/>
            <person name="Albert T.J."/>
            <person name="Weinstock G.M."/>
        </authorList>
    </citation>
    <scope>NUCLEOTIDE SEQUENCE [LARGE SCALE GENOMIC DNA]</scope>
    <source>
        <strain>SS14</strain>
    </source>
</reference>
<protein>
    <recommendedName>
        <fullName evidence="1">dITP/XTP pyrophosphatase</fullName>
        <ecNumber evidence="1">3.6.1.66</ecNumber>
    </recommendedName>
    <alternativeName>
        <fullName evidence="1">Non-canonical purine NTP pyrophosphatase</fullName>
    </alternativeName>
    <alternativeName>
        <fullName evidence="1">Non-standard purine NTP pyrophosphatase</fullName>
    </alternativeName>
    <alternativeName>
        <fullName evidence="1">Nucleoside-triphosphate diphosphatase</fullName>
    </alternativeName>
    <alternativeName>
        <fullName evidence="1">Nucleoside-triphosphate pyrophosphatase</fullName>
        <shortName evidence="1">NTPase</shortName>
    </alternativeName>
</protein>
<dbReference type="EC" id="3.6.1.66" evidence="1"/>
<dbReference type="EMBL" id="CP000805">
    <property type="protein sequence ID" value="ACD70863.1"/>
    <property type="molecule type" value="Genomic_DNA"/>
</dbReference>
<dbReference type="SMR" id="B2S334"/>
<dbReference type="KEGG" id="tpp:TPASS_0438"/>
<dbReference type="PATRIC" id="fig|455434.6.peg.438"/>
<dbReference type="Proteomes" id="UP000001202">
    <property type="component" value="Chromosome"/>
</dbReference>
<dbReference type="GO" id="GO:0005829">
    <property type="term" value="C:cytosol"/>
    <property type="evidence" value="ECO:0007669"/>
    <property type="project" value="TreeGrafter"/>
</dbReference>
<dbReference type="GO" id="GO:0035870">
    <property type="term" value="F:dITP diphosphatase activity"/>
    <property type="evidence" value="ECO:0007669"/>
    <property type="project" value="RHEA"/>
</dbReference>
<dbReference type="GO" id="GO:0036220">
    <property type="term" value="F:ITP diphosphatase activity"/>
    <property type="evidence" value="ECO:0007669"/>
    <property type="project" value="UniProtKB-EC"/>
</dbReference>
<dbReference type="GO" id="GO:0046872">
    <property type="term" value="F:metal ion binding"/>
    <property type="evidence" value="ECO:0007669"/>
    <property type="project" value="UniProtKB-KW"/>
</dbReference>
<dbReference type="GO" id="GO:0000166">
    <property type="term" value="F:nucleotide binding"/>
    <property type="evidence" value="ECO:0007669"/>
    <property type="project" value="UniProtKB-KW"/>
</dbReference>
<dbReference type="GO" id="GO:0017111">
    <property type="term" value="F:ribonucleoside triphosphate phosphatase activity"/>
    <property type="evidence" value="ECO:0007669"/>
    <property type="project" value="InterPro"/>
</dbReference>
<dbReference type="GO" id="GO:0036222">
    <property type="term" value="F:XTP diphosphatase activity"/>
    <property type="evidence" value="ECO:0007669"/>
    <property type="project" value="RHEA"/>
</dbReference>
<dbReference type="GO" id="GO:0009117">
    <property type="term" value="P:nucleotide metabolic process"/>
    <property type="evidence" value="ECO:0007669"/>
    <property type="project" value="UniProtKB-KW"/>
</dbReference>
<dbReference type="GO" id="GO:0009146">
    <property type="term" value="P:purine nucleoside triphosphate catabolic process"/>
    <property type="evidence" value="ECO:0007669"/>
    <property type="project" value="UniProtKB-UniRule"/>
</dbReference>
<dbReference type="CDD" id="cd00515">
    <property type="entry name" value="HAM1"/>
    <property type="match status" value="1"/>
</dbReference>
<dbReference type="FunFam" id="3.90.950.10:FF:000001">
    <property type="entry name" value="dITP/XTP pyrophosphatase"/>
    <property type="match status" value="1"/>
</dbReference>
<dbReference type="Gene3D" id="3.90.950.10">
    <property type="match status" value="1"/>
</dbReference>
<dbReference type="HAMAP" id="MF_01405">
    <property type="entry name" value="Non_canon_purine_NTPase"/>
    <property type="match status" value="1"/>
</dbReference>
<dbReference type="InterPro" id="IPR020922">
    <property type="entry name" value="dITP/XTP_pyrophosphatase"/>
</dbReference>
<dbReference type="InterPro" id="IPR029001">
    <property type="entry name" value="ITPase-like_fam"/>
</dbReference>
<dbReference type="InterPro" id="IPR002637">
    <property type="entry name" value="RdgB/HAM1"/>
</dbReference>
<dbReference type="PANTHER" id="PTHR11067:SF9">
    <property type="entry name" value="INOSINE TRIPHOSPHATE PYROPHOSPHATASE"/>
    <property type="match status" value="1"/>
</dbReference>
<dbReference type="PANTHER" id="PTHR11067">
    <property type="entry name" value="INOSINE TRIPHOSPHATE PYROPHOSPHATASE/HAM1 PROTEIN"/>
    <property type="match status" value="1"/>
</dbReference>
<dbReference type="Pfam" id="PF01725">
    <property type="entry name" value="Ham1p_like"/>
    <property type="match status" value="1"/>
</dbReference>
<dbReference type="SUPFAM" id="SSF52972">
    <property type="entry name" value="ITPase-like"/>
    <property type="match status" value="1"/>
</dbReference>
<sequence length="269" mass="30009">MRAVDFLRRATVCWYMRIYLASNNAHKHAEFSSLFPMHTILLPKDEGIDFFSPEDGSTFFANARQKADALYDVVHAPVLADDSGLCVDALDGDPGVHSARFGAQHGVHTDTARMQLLLERMHGRQDRACSFVCVAVLKLGSVPLCVGRGVCRGVLTTEMSGVEGFGYDPIFLLPHLGRTFAQLSIEEKNRVSHRALAALRLAQVLAMMQLPRALRYELKLLRGARRMTRGGVLRPGAPCAQRKGQTAQTARRHKFYARARRCARRIHRA</sequence>
<name>IXTPA_TREPS</name>
<keyword id="KW-0378">Hydrolase</keyword>
<keyword id="KW-0460">Magnesium</keyword>
<keyword id="KW-0479">Metal-binding</keyword>
<keyword id="KW-0546">Nucleotide metabolism</keyword>
<keyword id="KW-0547">Nucleotide-binding</keyword>
<accession>B2S334</accession>